<evidence type="ECO:0000250" key="1"/>
<evidence type="ECO:0000250" key="2">
    <source>
        <dbReference type="UniProtKB" id="P00157"/>
    </source>
</evidence>
<evidence type="ECO:0000255" key="3">
    <source>
        <dbReference type="PROSITE-ProRule" id="PRU00967"/>
    </source>
</evidence>
<evidence type="ECO:0000255" key="4">
    <source>
        <dbReference type="PROSITE-ProRule" id="PRU00968"/>
    </source>
</evidence>
<reference key="1">
    <citation type="journal article" date="1999" name="Mar. Mamm. Sci.">
        <title>Phylogenetic relationships among the delphinid cetaceans based on full cytochrome b sequences.</title>
        <authorList>
            <person name="LeDuc R.G."/>
            <person name="Perrin W.F."/>
            <person name="Dizon A.E."/>
        </authorList>
    </citation>
    <scope>NUCLEOTIDE SEQUENCE [GENOMIC DNA]</scope>
</reference>
<dbReference type="EMBL" id="AF084074">
    <property type="protein sequence ID" value="AAD54451.1"/>
    <property type="molecule type" value="Genomic_DNA"/>
</dbReference>
<dbReference type="RefSeq" id="NP_944749.1">
    <property type="nucleotide sequence ID" value="NC_005278.1"/>
</dbReference>
<dbReference type="SMR" id="Q9TDL1"/>
<dbReference type="GO" id="GO:0005743">
    <property type="term" value="C:mitochondrial inner membrane"/>
    <property type="evidence" value="ECO:0007669"/>
    <property type="project" value="UniProtKB-SubCell"/>
</dbReference>
<dbReference type="GO" id="GO:0045275">
    <property type="term" value="C:respiratory chain complex III"/>
    <property type="evidence" value="ECO:0007669"/>
    <property type="project" value="InterPro"/>
</dbReference>
<dbReference type="GO" id="GO:0046872">
    <property type="term" value="F:metal ion binding"/>
    <property type="evidence" value="ECO:0007669"/>
    <property type="project" value="UniProtKB-KW"/>
</dbReference>
<dbReference type="GO" id="GO:0008121">
    <property type="term" value="F:ubiquinol-cytochrome-c reductase activity"/>
    <property type="evidence" value="ECO:0007669"/>
    <property type="project" value="InterPro"/>
</dbReference>
<dbReference type="GO" id="GO:0006122">
    <property type="term" value="P:mitochondrial electron transport, ubiquinol to cytochrome c"/>
    <property type="evidence" value="ECO:0007669"/>
    <property type="project" value="TreeGrafter"/>
</dbReference>
<dbReference type="CDD" id="cd00290">
    <property type="entry name" value="cytochrome_b_C"/>
    <property type="match status" value="1"/>
</dbReference>
<dbReference type="CDD" id="cd00284">
    <property type="entry name" value="Cytochrome_b_N"/>
    <property type="match status" value="1"/>
</dbReference>
<dbReference type="FunFam" id="1.20.810.10:FF:000002">
    <property type="entry name" value="Cytochrome b"/>
    <property type="match status" value="1"/>
</dbReference>
<dbReference type="Gene3D" id="1.20.810.10">
    <property type="entry name" value="Cytochrome Bc1 Complex, Chain C"/>
    <property type="match status" value="1"/>
</dbReference>
<dbReference type="InterPro" id="IPR005798">
    <property type="entry name" value="Cyt_b/b6_C"/>
</dbReference>
<dbReference type="InterPro" id="IPR036150">
    <property type="entry name" value="Cyt_b/b6_C_sf"/>
</dbReference>
<dbReference type="InterPro" id="IPR005797">
    <property type="entry name" value="Cyt_b/b6_N"/>
</dbReference>
<dbReference type="InterPro" id="IPR027387">
    <property type="entry name" value="Cytb/b6-like_sf"/>
</dbReference>
<dbReference type="InterPro" id="IPR030689">
    <property type="entry name" value="Cytochrome_b"/>
</dbReference>
<dbReference type="InterPro" id="IPR048260">
    <property type="entry name" value="Cytochrome_b_C_euk/bac"/>
</dbReference>
<dbReference type="InterPro" id="IPR048259">
    <property type="entry name" value="Cytochrome_b_N_euk/bac"/>
</dbReference>
<dbReference type="InterPro" id="IPR016174">
    <property type="entry name" value="Di-haem_cyt_TM"/>
</dbReference>
<dbReference type="PANTHER" id="PTHR19271">
    <property type="entry name" value="CYTOCHROME B"/>
    <property type="match status" value="1"/>
</dbReference>
<dbReference type="PANTHER" id="PTHR19271:SF16">
    <property type="entry name" value="CYTOCHROME B"/>
    <property type="match status" value="1"/>
</dbReference>
<dbReference type="Pfam" id="PF00032">
    <property type="entry name" value="Cytochrom_B_C"/>
    <property type="match status" value="1"/>
</dbReference>
<dbReference type="Pfam" id="PF00033">
    <property type="entry name" value="Cytochrome_B"/>
    <property type="match status" value="1"/>
</dbReference>
<dbReference type="PIRSF" id="PIRSF038885">
    <property type="entry name" value="COB"/>
    <property type="match status" value="1"/>
</dbReference>
<dbReference type="SUPFAM" id="SSF81648">
    <property type="entry name" value="a domain/subunit of cytochrome bc1 complex (Ubiquinol-cytochrome c reductase)"/>
    <property type="match status" value="1"/>
</dbReference>
<dbReference type="SUPFAM" id="SSF81342">
    <property type="entry name" value="Transmembrane di-heme cytochromes"/>
    <property type="match status" value="1"/>
</dbReference>
<dbReference type="PROSITE" id="PS51003">
    <property type="entry name" value="CYTB_CTER"/>
    <property type="match status" value="1"/>
</dbReference>
<dbReference type="PROSITE" id="PS51002">
    <property type="entry name" value="CYTB_NTER"/>
    <property type="match status" value="1"/>
</dbReference>
<comment type="function">
    <text evidence="2">Component of the ubiquinol-cytochrome c reductase complex (complex III or cytochrome b-c1 complex) that is part of the mitochondrial respiratory chain. The b-c1 complex mediates electron transfer from ubiquinol to cytochrome c. Contributes to the generation of a proton gradient across the mitochondrial membrane that is then used for ATP synthesis.</text>
</comment>
<comment type="cofactor">
    <cofactor evidence="2">
        <name>heme b</name>
        <dbReference type="ChEBI" id="CHEBI:60344"/>
    </cofactor>
    <text evidence="2">Binds 2 heme b groups non-covalently.</text>
</comment>
<comment type="subunit">
    <text evidence="2">The cytochrome bc1 complex contains 11 subunits: 3 respiratory subunits (MT-CYB, CYC1 and UQCRFS1), 2 core proteins (UQCRC1 and UQCRC2) and 6 low-molecular weight proteins (UQCRH/QCR6, UQCRB/QCR7, UQCRQ/QCR8, UQCR10/QCR9, UQCR11/QCR10 and a cleavage product of UQCRFS1). This cytochrome bc1 complex then forms a dimer.</text>
</comment>
<comment type="subcellular location">
    <subcellularLocation>
        <location evidence="2">Mitochondrion inner membrane</location>
        <topology evidence="2">Multi-pass membrane protein</topology>
    </subcellularLocation>
</comment>
<comment type="miscellaneous">
    <text evidence="1">Heme 1 (or BL or b562) is low-potential and absorbs at about 562 nm, and heme 2 (or BH or b566) is high-potential and absorbs at about 566 nm.</text>
</comment>
<comment type="similarity">
    <text evidence="3 4">Belongs to the cytochrome b family.</text>
</comment>
<comment type="caution">
    <text evidence="2">The full-length protein contains only eight transmembrane helices, not nine as predicted by bioinformatics tools.</text>
</comment>
<keyword id="KW-0249">Electron transport</keyword>
<keyword id="KW-0349">Heme</keyword>
<keyword id="KW-0408">Iron</keyword>
<keyword id="KW-0472">Membrane</keyword>
<keyword id="KW-0479">Metal-binding</keyword>
<keyword id="KW-0496">Mitochondrion</keyword>
<keyword id="KW-0999">Mitochondrion inner membrane</keyword>
<keyword id="KW-0679">Respiratory chain</keyword>
<keyword id="KW-0812">Transmembrane</keyword>
<keyword id="KW-1133">Transmembrane helix</keyword>
<keyword id="KW-0813">Transport</keyword>
<keyword id="KW-0830">Ubiquinone</keyword>
<geneLocation type="mitochondrion"/>
<gene>
    <name type="primary">MT-CYB</name>
    <name type="synonym">COB</name>
    <name type="synonym">CYTB</name>
    <name type="synonym">MTCYB</name>
</gene>
<organism>
    <name type="scientific">Lagenorhynchus albirostris</name>
    <name type="common">White-beaked dolphin</name>
    <name type="synonym">Delphinus albirostris</name>
    <dbReference type="NCBI Taxonomy" id="27610"/>
    <lineage>
        <taxon>Eukaryota</taxon>
        <taxon>Metazoa</taxon>
        <taxon>Chordata</taxon>
        <taxon>Craniata</taxon>
        <taxon>Vertebrata</taxon>
        <taxon>Euteleostomi</taxon>
        <taxon>Mammalia</taxon>
        <taxon>Eutheria</taxon>
        <taxon>Laurasiatheria</taxon>
        <taxon>Artiodactyla</taxon>
        <taxon>Whippomorpha</taxon>
        <taxon>Cetacea</taxon>
        <taxon>Odontoceti</taxon>
        <taxon>Delphinidae</taxon>
        <taxon>Lagenorhynchus</taxon>
    </lineage>
</organism>
<proteinExistence type="inferred from homology"/>
<protein>
    <recommendedName>
        <fullName>Cytochrome b</fullName>
    </recommendedName>
    <alternativeName>
        <fullName>Complex III subunit 3</fullName>
    </alternativeName>
    <alternativeName>
        <fullName>Complex III subunit III</fullName>
    </alternativeName>
    <alternativeName>
        <fullName>Cytochrome b-c1 complex subunit 3</fullName>
    </alternativeName>
    <alternativeName>
        <fullName>Ubiquinol-cytochrome-c reductase complex cytochrome b subunit</fullName>
    </alternativeName>
</protein>
<sequence length="379" mass="42737">MTNIRKTHPLMKILNDAFIDLPTPSSISSWWNFGSLLGLCLIMQILTGLFLAMHYTPDTSTAFSSVAHICRDVNYGWLIRYLHANGASMFFICLYAHIGRGLYYGSYMFQETWNIGVLLLLTVMATAFVGYVLPWGQMSFWGATVITNLLSAIPYIGTTLVEWIWGGFSVDKATLTRFFAFHFILPFIITALVAVHLLFLHETGSNNPTGIPSNMDMIPFHPYYTIKDILGALLLILTLLALTLFTPDLLGDPDNYTPANPLSTPAHIKPEWYFLFAYAILRSIPNKLGGVLALLLSILILIFIPMLQTSKQRSMMFRPFSQLLFWTLVADLLTLTWIGGQPVEHPYIIVGQLASILYFLLILVLMPTISLIENKLLKW</sequence>
<name>CYB_LAGAL</name>
<accession>Q9TDL1</accession>
<feature type="chain" id="PRO_0000061078" description="Cytochrome b">
    <location>
        <begin position="1"/>
        <end position="379"/>
    </location>
</feature>
<feature type="transmembrane region" description="Helical" evidence="2">
    <location>
        <begin position="33"/>
        <end position="53"/>
    </location>
</feature>
<feature type="transmembrane region" description="Helical" evidence="2">
    <location>
        <begin position="77"/>
        <end position="98"/>
    </location>
</feature>
<feature type="transmembrane region" description="Helical" evidence="2">
    <location>
        <begin position="113"/>
        <end position="133"/>
    </location>
</feature>
<feature type="transmembrane region" description="Helical" evidence="2">
    <location>
        <begin position="178"/>
        <end position="198"/>
    </location>
</feature>
<feature type="transmembrane region" description="Helical" evidence="2">
    <location>
        <begin position="226"/>
        <end position="246"/>
    </location>
</feature>
<feature type="transmembrane region" description="Helical" evidence="2">
    <location>
        <begin position="288"/>
        <end position="308"/>
    </location>
</feature>
<feature type="transmembrane region" description="Helical" evidence="2">
    <location>
        <begin position="320"/>
        <end position="340"/>
    </location>
</feature>
<feature type="transmembrane region" description="Helical" evidence="2">
    <location>
        <begin position="347"/>
        <end position="367"/>
    </location>
</feature>
<feature type="binding site" description="axial binding residue" evidence="2">
    <location>
        <position position="83"/>
    </location>
    <ligand>
        <name>heme b</name>
        <dbReference type="ChEBI" id="CHEBI:60344"/>
        <label>b562</label>
    </ligand>
    <ligandPart>
        <name>Fe</name>
        <dbReference type="ChEBI" id="CHEBI:18248"/>
    </ligandPart>
</feature>
<feature type="binding site" description="axial binding residue" evidence="2">
    <location>
        <position position="97"/>
    </location>
    <ligand>
        <name>heme b</name>
        <dbReference type="ChEBI" id="CHEBI:60344"/>
        <label>b566</label>
    </ligand>
    <ligandPart>
        <name>Fe</name>
        <dbReference type="ChEBI" id="CHEBI:18248"/>
    </ligandPart>
</feature>
<feature type="binding site" description="axial binding residue" evidence="2">
    <location>
        <position position="182"/>
    </location>
    <ligand>
        <name>heme b</name>
        <dbReference type="ChEBI" id="CHEBI:60344"/>
        <label>b562</label>
    </ligand>
    <ligandPart>
        <name>Fe</name>
        <dbReference type="ChEBI" id="CHEBI:18248"/>
    </ligandPart>
</feature>
<feature type="binding site" description="axial binding residue" evidence="2">
    <location>
        <position position="196"/>
    </location>
    <ligand>
        <name>heme b</name>
        <dbReference type="ChEBI" id="CHEBI:60344"/>
        <label>b566</label>
    </ligand>
    <ligandPart>
        <name>Fe</name>
        <dbReference type="ChEBI" id="CHEBI:18248"/>
    </ligandPart>
</feature>
<feature type="binding site" evidence="2">
    <location>
        <position position="201"/>
    </location>
    <ligand>
        <name>a ubiquinone</name>
        <dbReference type="ChEBI" id="CHEBI:16389"/>
    </ligand>
</feature>